<accession>Q06GQ2</accession>
<dbReference type="EC" id="4.1.1.39" evidence="1"/>
<dbReference type="EMBL" id="DQ887677">
    <property type="protein sequence ID" value="ABI14480.1"/>
    <property type="molecule type" value="Genomic_DNA"/>
</dbReference>
<dbReference type="RefSeq" id="YP_784481.1">
    <property type="nucleotide sequence ID" value="NC_008457.1"/>
</dbReference>
<dbReference type="SMR" id="Q06GQ2"/>
<dbReference type="GeneID" id="4363664"/>
<dbReference type="GO" id="GO:0009507">
    <property type="term" value="C:chloroplast"/>
    <property type="evidence" value="ECO:0007669"/>
    <property type="project" value="UniProtKB-SubCell"/>
</dbReference>
<dbReference type="GO" id="GO:0000287">
    <property type="term" value="F:magnesium ion binding"/>
    <property type="evidence" value="ECO:0007669"/>
    <property type="project" value="UniProtKB-UniRule"/>
</dbReference>
<dbReference type="GO" id="GO:0004497">
    <property type="term" value="F:monooxygenase activity"/>
    <property type="evidence" value="ECO:0007669"/>
    <property type="project" value="UniProtKB-KW"/>
</dbReference>
<dbReference type="GO" id="GO:0016984">
    <property type="term" value="F:ribulose-bisphosphate carboxylase activity"/>
    <property type="evidence" value="ECO:0007669"/>
    <property type="project" value="UniProtKB-UniRule"/>
</dbReference>
<dbReference type="GO" id="GO:0009853">
    <property type="term" value="P:photorespiration"/>
    <property type="evidence" value="ECO:0007669"/>
    <property type="project" value="UniProtKB-KW"/>
</dbReference>
<dbReference type="GO" id="GO:0019253">
    <property type="term" value="P:reductive pentose-phosphate cycle"/>
    <property type="evidence" value="ECO:0007669"/>
    <property type="project" value="UniProtKB-UniRule"/>
</dbReference>
<dbReference type="CDD" id="cd08212">
    <property type="entry name" value="RuBisCO_large_I"/>
    <property type="match status" value="1"/>
</dbReference>
<dbReference type="FunFam" id="3.20.20.110:FF:000001">
    <property type="entry name" value="Ribulose bisphosphate carboxylase large chain"/>
    <property type="match status" value="1"/>
</dbReference>
<dbReference type="FunFam" id="3.30.70.150:FF:000001">
    <property type="entry name" value="Ribulose bisphosphate carboxylase large chain"/>
    <property type="match status" value="1"/>
</dbReference>
<dbReference type="Gene3D" id="3.20.20.110">
    <property type="entry name" value="Ribulose bisphosphate carboxylase, large subunit, C-terminal domain"/>
    <property type="match status" value="1"/>
</dbReference>
<dbReference type="Gene3D" id="3.30.70.150">
    <property type="entry name" value="RuBisCO large subunit, N-terminal domain"/>
    <property type="match status" value="1"/>
</dbReference>
<dbReference type="HAMAP" id="MF_01338">
    <property type="entry name" value="RuBisCO_L_type1"/>
    <property type="match status" value="1"/>
</dbReference>
<dbReference type="InterPro" id="IPR033966">
    <property type="entry name" value="RuBisCO"/>
</dbReference>
<dbReference type="InterPro" id="IPR020878">
    <property type="entry name" value="RuBisCo_large_chain_AS"/>
</dbReference>
<dbReference type="InterPro" id="IPR000685">
    <property type="entry name" value="RuBisCO_lsu_C"/>
</dbReference>
<dbReference type="InterPro" id="IPR036376">
    <property type="entry name" value="RuBisCO_lsu_C_sf"/>
</dbReference>
<dbReference type="InterPro" id="IPR017443">
    <property type="entry name" value="RuBisCO_lsu_fd_N"/>
</dbReference>
<dbReference type="InterPro" id="IPR036422">
    <property type="entry name" value="RuBisCO_lsu_N_sf"/>
</dbReference>
<dbReference type="InterPro" id="IPR020888">
    <property type="entry name" value="RuBisCO_lsuI"/>
</dbReference>
<dbReference type="NCBIfam" id="NF003252">
    <property type="entry name" value="PRK04208.1"/>
    <property type="match status" value="1"/>
</dbReference>
<dbReference type="PANTHER" id="PTHR42704">
    <property type="entry name" value="RIBULOSE BISPHOSPHATE CARBOXYLASE"/>
    <property type="match status" value="1"/>
</dbReference>
<dbReference type="PANTHER" id="PTHR42704:SF15">
    <property type="entry name" value="RIBULOSE BISPHOSPHATE CARBOXYLASE LARGE CHAIN"/>
    <property type="match status" value="1"/>
</dbReference>
<dbReference type="Pfam" id="PF00016">
    <property type="entry name" value="RuBisCO_large"/>
    <property type="match status" value="1"/>
</dbReference>
<dbReference type="Pfam" id="PF02788">
    <property type="entry name" value="RuBisCO_large_N"/>
    <property type="match status" value="1"/>
</dbReference>
<dbReference type="SFLD" id="SFLDG01052">
    <property type="entry name" value="RuBisCO"/>
    <property type="match status" value="1"/>
</dbReference>
<dbReference type="SFLD" id="SFLDS00014">
    <property type="entry name" value="RuBisCO"/>
    <property type="match status" value="1"/>
</dbReference>
<dbReference type="SFLD" id="SFLDG00301">
    <property type="entry name" value="RuBisCO-like_proteins"/>
    <property type="match status" value="1"/>
</dbReference>
<dbReference type="SUPFAM" id="SSF51649">
    <property type="entry name" value="RuBisCo, C-terminal domain"/>
    <property type="match status" value="1"/>
</dbReference>
<dbReference type="SUPFAM" id="SSF54966">
    <property type="entry name" value="RuBisCO, large subunit, small (N-terminal) domain"/>
    <property type="match status" value="1"/>
</dbReference>
<dbReference type="PROSITE" id="PS00157">
    <property type="entry name" value="RUBISCO_LARGE"/>
    <property type="match status" value="1"/>
</dbReference>
<organism>
    <name type="scientific">Piper cenocladum</name>
    <name type="common">Ant piper</name>
    <dbReference type="NCBI Taxonomy" id="398741"/>
    <lineage>
        <taxon>Eukaryota</taxon>
        <taxon>Viridiplantae</taxon>
        <taxon>Streptophyta</taxon>
        <taxon>Embryophyta</taxon>
        <taxon>Tracheophyta</taxon>
        <taxon>Spermatophyta</taxon>
        <taxon>Magnoliopsida</taxon>
        <taxon>Magnoliidae</taxon>
        <taxon>Piperales</taxon>
        <taxon>Piperaceae</taxon>
        <taxon>Piper</taxon>
    </lineage>
</organism>
<proteinExistence type="inferred from homology"/>
<reference key="1">
    <citation type="journal article" date="2006" name="BMC Evol. Biol.">
        <title>Complete plastid genome sequences of Drimys, Liriodendron, and Piper: implications for the phylogenetic relationships of magnoliids.</title>
        <authorList>
            <person name="Cai Z."/>
            <person name="Penaflor C."/>
            <person name="Kuehl J.V."/>
            <person name="Leebens-Mack J."/>
            <person name="Carlson J.E."/>
            <person name="dePamphilis C.W."/>
            <person name="Boore J.L."/>
            <person name="Jansen R.K."/>
        </authorList>
    </citation>
    <scope>NUCLEOTIDE SEQUENCE [LARGE SCALE GENOMIC DNA]</scope>
</reference>
<feature type="propeptide" id="PRO_0000275367" evidence="1">
    <location>
        <begin position="1"/>
        <end position="2"/>
    </location>
</feature>
<feature type="chain" id="PRO_0000275368" description="Ribulose bisphosphate carboxylase large chain">
    <location>
        <begin position="3"/>
        <end position="475"/>
    </location>
</feature>
<feature type="active site" description="Proton acceptor" evidence="1">
    <location>
        <position position="175"/>
    </location>
</feature>
<feature type="active site" description="Proton acceptor" evidence="1">
    <location>
        <position position="294"/>
    </location>
</feature>
<feature type="binding site" description="in homodimeric partner" evidence="1">
    <location>
        <position position="123"/>
    </location>
    <ligand>
        <name>substrate</name>
    </ligand>
</feature>
<feature type="binding site" evidence="1">
    <location>
        <position position="173"/>
    </location>
    <ligand>
        <name>substrate</name>
    </ligand>
</feature>
<feature type="binding site" evidence="1">
    <location>
        <position position="177"/>
    </location>
    <ligand>
        <name>substrate</name>
    </ligand>
</feature>
<feature type="binding site" description="via carbamate group" evidence="1">
    <location>
        <position position="201"/>
    </location>
    <ligand>
        <name>Mg(2+)</name>
        <dbReference type="ChEBI" id="CHEBI:18420"/>
    </ligand>
</feature>
<feature type="binding site" evidence="1">
    <location>
        <position position="203"/>
    </location>
    <ligand>
        <name>Mg(2+)</name>
        <dbReference type="ChEBI" id="CHEBI:18420"/>
    </ligand>
</feature>
<feature type="binding site" evidence="1">
    <location>
        <position position="204"/>
    </location>
    <ligand>
        <name>Mg(2+)</name>
        <dbReference type="ChEBI" id="CHEBI:18420"/>
    </ligand>
</feature>
<feature type="binding site" evidence="1">
    <location>
        <position position="295"/>
    </location>
    <ligand>
        <name>substrate</name>
    </ligand>
</feature>
<feature type="binding site" evidence="1">
    <location>
        <position position="327"/>
    </location>
    <ligand>
        <name>substrate</name>
    </ligand>
</feature>
<feature type="binding site" evidence="1">
    <location>
        <position position="379"/>
    </location>
    <ligand>
        <name>substrate</name>
    </ligand>
</feature>
<feature type="site" description="Transition state stabilizer" evidence="1">
    <location>
        <position position="334"/>
    </location>
</feature>
<feature type="modified residue" description="N-acetylproline" evidence="1">
    <location>
        <position position="3"/>
    </location>
</feature>
<feature type="modified residue" description="N6,N6,N6-trimethyllysine" evidence="1">
    <location>
        <position position="14"/>
    </location>
</feature>
<feature type="modified residue" description="N6-carboxylysine" evidence="1">
    <location>
        <position position="201"/>
    </location>
</feature>
<feature type="disulfide bond" description="Interchain; in linked form" evidence="1">
    <location>
        <position position="247"/>
    </location>
</feature>
<sequence>MSPKTETKAYVGFKAGVKDYKLTYYTPEYETKDTDILAAFRVTPQPGVPPEEAGAAVAAESSTGTWTSVWTDGLTSLDRYKGRCYDIEPVAGEENQYICYVAYPLDLFEEGSVTNMFTSIVGNVFGFKALRALRLEDLRIPPAYSKTFQGPPHGIQVERDKLNKYGRPLLGCTIKPKLGLSAKNYGRAVYECLRGGLDFTKDDENVNSQPFMRWRDRFLFCAEALFKAQTETGEIKGHYLNATAGTCEEMIKRAVFARELGVPIVMHDYLTGGFTANTSLAHYCRDNGLLLHIHRAMHAVIDRQKNHGMHFRVLAKALRMSGGDHVHSGTVVGKLEGERDITLGFVDLLRDDFIEKDRSRGIYFTQDWVSMPGVLPVASGGIHVWHMPALTEIFGDDSVLQFGGGTLGHPWGNAPGAVANRVALEACVQARNEGRDLAREGNEIIREAAKWSPELAAACEVWKEIKFEFAAMDTL</sequence>
<gene>
    <name evidence="1" type="primary">rbcL</name>
</gene>
<evidence type="ECO:0000255" key="1">
    <source>
        <dbReference type="HAMAP-Rule" id="MF_01338"/>
    </source>
</evidence>
<name>RBL_PIPCE</name>
<protein>
    <recommendedName>
        <fullName evidence="1">Ribulose bisphosphate carboxylase large chain</fullName>
        <shortName evidence="1">RuBisCO large subunit</shortName>
        <ecNumber evidence="1">4.1.1.39</ecNumber>
    </recommendedName>
</protein>
<keyword id="KW-0007">Acetylation</keyword>
<keyword id="KW-0113">Calvin cycle</keyword>
<keyword id="KW-0120">Carbon dioxide fixation</keyword>
<keyword id="KW-0150">Chloroplast</keyword>
<keyword id="KW-1015">Disulfide bond</keyword>
<keyword id="KW-0456">Lyase</keyword>
<keyword id="KW-0460">Magnesium</keyword>
<keyword id="KW-0479">Metal-binding</keyword>
<keyword id="KW-0488">Methylation</keyword>
<keyword id="KW-0503">Monooxygenase</keyword>
<keyword id="KW-0560">Oxidoreductase</keyword>
<keyword id="KW-0601">Photorespiration</keyword>
<keyword id="KW-0602">Photosynthesis</keyword>
<keyword id="KW-0934">Plastid</keyword>
<geneLocation type="chloroplast"/>
<comment type="function">
    <text evidence="1">RuBisCO catalyzes two reactions: the carboxylation of D-ribulose 1,5-bisphosphate, the primary event in carbon dioxide fixation, as well as the oxidative fragmentation of the pentose substrate in the photorespiration process. Both reactions occur simultaneously and in competition at the same active site.</text>
</comment>
<comment type="catalytic activity">
    <reaction evidence="1">
        <text>2 (2R)-3-phosphoglycerate + 2 H(+) = D-ribulose 1,5-bisphosphate + CO2 + H2O</text>
        <dbReference type="Rhea" id="RHEA:23124"/>
        <dbReference type="ChEBI" id="CHEBI:15377"/>
        <dbReference type="ChEBI" id="CHEBI:15378"/>
        <dbReference type="ChEBI" id="CHEBI:16526"/>
        <dbReference type="ChEBI" id="CHEBI:57870"/>
        <dbReference type="ChEBI" id="CHEBI:58272"/>
        <dbReference type="EC" id="4.1.1.39"/>
    </reaction>
</comment>
<comment type="catalytic activity">
    <reaction evidence="1">
        <text>D-ribulose 1,5-bisphosphate + O2 = 2-phosphoglycolate + (2R)-3-phosphoglycerate + 2 H(+)</text>
        <dbReference type="Rhea" id="RHEA:36631"/>
        <dbReference type="ChEBI" id="CHEBI:15378"/>
        <dbReference type="ChEBI" id="CHEBI:15379"/>
        <dbReference type="ChEBI" id="CHEBI:57870"/>
        <dbReference type="ChEBI" id="CHEBI:58033"/>
        <dbReference type="ChEBI" id="CHEBI:58272"/>
    </reaction>
</comment>
<comment type="cofactor">
    <cofactor evidence="1">
        <name>Mg(2+)</name>
        <dbReference type="ChEBI" id="CHEBI:18420"/>
    </cofactor>
    <text evidence="1">Binds 1 Mg(2+) ion per subunit.</text>
</comment>
<comment type="subunit">
    <text evidence="1">Heterohexadecamer of 8 large chains and 8 small chains; disulfide-linked. The disulfide link is formed within the large subunit homodimers.</text>
</comment>
<comment type="subcellular location">
    <subcellularLocation>
        <location>Plastid</location>
        <location>Chloroplast</location>
    </subcellularLocation>
</comment>
<comment type="PTM">
    <text evidence="1">The disulfide bond which can form in the large chain dimeric partners within the hexadecamer appears to be associated with oxidative stress and protein turnover.</text>
</comment>
<comment type="miscellaneous">
    <text evidence="1">The basic functional RuBisCO is composed of a large chain homodimer in a 'head-to-tail' conformation. In form I RuBisCO this homodimer is arranged in a barrel-like tetramer with the small subunits forming a tetrameric 'cap' on each end of the 'barrel'.</text>
</comment>
<comment type="similarity">
    <text evidence="1">Belongs to the RuBisCO large chain family. Type I subfamily.</text>
</comment>